<name>Y810_STRSV</name>
<protein>
    <recommendedName>
        <fullName evidence="1">Nucleotide-binding protein SSA_0810</fullName>
    </recommendedName>
</protein>
<dbReference type="EMBL" id="CP000387">
    <property type="protein sequence ID" value="ABN44241.1"/>
    <property type="molecule type" value="Genomic_DNA"/>
</dbReference>
<dbReference type="RefSeq" id="WP_011836729.1">
    <property type="nucleotide sequence ID" value="NC_009009.1"/>
</dbReference>
<dbReference type="RefSeq" id="YP_001034791.1">
    <property type="nucleotide sequence ID" value="NC_009009.1"/>
</dbReference>
<dbReference type="SMR" id="A3CM36"/>
<dbReference type="STRING" id="388919.SSA_0810"/>
<dbReference type="KEGG" id="ssa:SSA_0810"/>
<dbReference type="PATRIC" id="fig|388919.9.peg.776"/>
<dbReference type="eggNOG" id="COG1660">
    <property type="taxonomic scope" value="Bacteria"/>
</dbReference>
<dbReference type="HOGENOM" id="CLU_059558_0_0_9"/>
<dbReference type="OrthoDB" id="9784461at2"/>
<dbReference type="Proteomes" id="UP000002148">
    <property type="component" value="Chromosome"/>
</dbReference>
<dbReference type="GO" id="GO:0005524">
    <property type="term" value="F:ATP binding"/>
    <property type="evidence" value="ECO:0007669"/>
    <property type="project" value="UniProtKB-UniRule"/>
</dbReference>
<dbReference type="GO" id="GO:0005525">
    <property type="term" value="F:GTP binding"/>
    <property type="evidence" value="ECO:0007669"/>
    <property type="project" value="UniProtKB-UniRule"/>
</dbReference>
<dbReference type="Gene3D" id="3.40.50.300">
    <property type="entry name" value="P-loop containing nucleotide triphosphate hydrolases"/>
    <property type="match status" value="1"/>
</dbReference>
<dbReference type="HAMAP" id="MF_00636">
    <property type="entry name" value="RapZ_like"/>
    <property type="match status" value="1"/>
</dbReference>
<dbReference type="InterPro" id="IPR027417">
    <property type="entry name" value="P-loop_NTPase"/>
</dbReference>
<dbReference type="InterPro" id="IPR005337">
    <property type="entry name" value="RapZ-like"/>
</dbReference>
<dbReference type="InterPro" id="IPR053930">
    <property type="entry name" value="RapZ-like_N"/>
</dbReference>
<dbReference type="InterPro" id="IPR053931">
    <property type="entry name" value="RapZ_C"/>
</dbReference>
<dbReference type="NCBIfam" id="NF003828">
    <property type="entry name" value="PRK05416.1"/>
    <property type="match status" value="1"/>
</dbReference>
<dbReference type="PANTHER" id="PTHR30448">
    <property type="entry name" value="RNASE ADAPTER PROTEIN RAPZ"/>
    <property type="match status" value="1"/>
</dbReference>
<dbReference type="PANTHER" id="PTHR30448:SF0">
    <property type="entry name" value="RNASE ADAPTER PROTEIN RAPZ"/>
    <property type="match status" value="1"/>
</dbReference>
<dbReference type="Pfam" id="PF22740">
    <property type="entry name" value="PapZ_C"/>
    <property type="match status" value="1"/>
</dbReference>
<dbReference type="Pfam" id="PF03668">
    <property type="entry name" value="RapZ-like_N"/>
    <property type="match status" value="1"/>
</dbReference>
<dbReference type="PIRSF" id="PIRSF005052">
    <property type="entry name" value="P-loopkin"/>
    <property type="match status" value="1"/>
</dbReference>
<dbReference type="SUPFAM" id="SSF52540">
    <property type="entry name" value="P-loop containing nucleoside triphosphate hydrolases"/>
    <property type="match status" value="1"/>
</dbReference>
<keyword id="KW-0067">ATP-binding</keyword>
<keyword id="KW-0342">GTP-binding</keyword>
<keyword id="KW-0547">Nucleotide-binding</keyword>
<keyword id="KW-1185">Reference proteome</keyword>
<gene>
    <name type="ordered locus">SSA_0810</name>
</gene>
<proteinExistence type="inferred from homology"/>
<accession>A3CM36</accession>
<organism>
    <name type="scientific">Streptococcus sanguinis (strain SK36)</name>
    <dbReference type="NCBI Taxonomy" id="388919"/>
    <lineage>
        <taxon>Bacteria</taxon>
        <taxon>Bacillati</taxon>
        <taxon>Bacillota</taxon>
        <taxon>Bacilli</taxon>
        <taxon>Lactobacillales</taxon>
        <taxon>Streptococcaceae</taxon>
        <taxon>Streptococcus</taxon>
    </lineage>
</organism>
<reference key="1">
    <citation type="journal article" date="2007" name="J. Bacteriol.">
        <title>Genome of the opportunistic pathogen Streptococcus sanguinis.</title>
        <authorList>
            <person name="Xu P."/>
            <person name="Alves J.M."/>
            <person name="Kitten T."/>
            <person name="Brown A."/>
            <person name="Chen Z."/>
            <person name="Ozaki L.S."/>
            <person name="Manque P."/>
            <person name="Ge X."/>
            <person name="Serrano M.G."/>
            <person name="Puiu D."/>
            <person name="Hendricks S."/>
            <person name="Wang Y."/>
            <person name="Chaplin M.D."/>
            <person name="Akan D."/>
            <person name="Paik S."/>
            <person name="Peterson D.L."/>
            <person name="Macrina F.L."/>
            <person name="Buck G.A."/>
        </authorList>
    </citation>
    <scope>NUCLEOTIDE SEQUENCE [LARGE SCALE GENOMIC DNA]</scope>
    <source>
        <strain>SK36</strain>
    </source>
</reference>
<evidence type="ECO:0000255" key="1">
    <source>
        <dbReference type="HAMAP-Rule" id="MF_00636"/>
    </source>
</evidence>
<evidence type="ECO:0000256" key="2">
    <source>
        <dbReference type="SAM" id="MobiDB-lite"/>
    </source>
</evidence>
<feature type="chain" id="PRO_1000056867" description="Nucleotide-binding protein SSA_0810">
    <location>
        <begin position="1"/>
        <end position="296"/>
    </location>
</feature>
<feature type="region of interest" description="Disordered" evidence="2">
    <location>
        <begin position="277"/>
        <end position="296"/>
    </location>
</feature>
<feature type="compositionally biased region" description="Basic and acidic residues" evidence="2">
    <location>
        <begin position="282"/>
        <end position="296"/>
    </location>
</feature>
<feature type="binding site" evidence="1">
    <location>
        <begin position="13"/>
        <end position="20"/>
    </location>
    <ligand>
        <name>ATP</name>
        <dbReference type="ChEBI" id="CHEBI:30616"/>
    </ligand>
</feature>
<feature type="binding site" evidence="1">
    <location>
        <begin position="63"/>
        <end position="66"/>
    </location>
    <ligand>
        <name>GTP</name>
        <dbReference type="ChEBI" id="CHEBI:37565"/>
    </ligand>
</feature>
<sequence>MSEKKIQLVIVTGMSGAGKTVAIQSFEDLGYFTIDNMPPTLVPKFLQLVEGTTDNDKLALVVDMRSRSFFLQIQNVLDELEQNENIDFKILFLDAADKELVARYKETRRSHPLAADGRILDGIKLERELLAPLKNLSQNVVDTTDLTPRELRKTISEQFSNQADMHSFRIEVMSFGFKYGLPLDADLVFDVRFLPNPYYKPELRNQTGLDKDVFDYVMNHAESEEFYKNLLGLIEPILPGYQKEGKSILTIAVGCTGGQHRSVAFAQRLADDLAKNWPVNSSHRDKNRRKETVNRS</sequence>
<comment type="function">
    <text evidence="1">Displays ATPase and GTPase activities.</text>
</comment>
<comment type="similarity">
    <text evidence="1">Belongs to the RapZ-like family.</text>
</comment>